<comment type="function">
    <text evidence="1">Aspartyl-tRNA synthetase with relaxed tRNA specificity since it is able to aspartylate not only its cognate tRNA(Asp) but also tRNA(Asn). Reaction proceeds in two steps: L-aspartate is first activated by ATP to form Asp-AMP and then transferred to the acceptor end of tRNA(Asp/Asn).</text>
</comment>
<comment type="catalytic activity">
    <reaction evidence="1">
        <text>tRNA(Asx) + L-aspartate + ATP = L-aspartyl-tRNA(Asx) + AMP + diphosphate</text>
        <dbReference type="Rhea" id="RHEA:18349"/>
        <dbReference type="Rhea" id="RHEA-COMP:9710"/>
        <dbReference type="Rhea" id="RHEA-COMP:9711"/>
        <dbReference type="ChEBI" id="CHEBI:29991"/>
        <dbReference type="ChEBI" id="CHEBI:30616"/>
        <dbReference type="ChEBI" id="CHEBI:33019"/>
        <dbReference type="ChEBI" id="CHEBI:78442"/>
        <dbReference type="ChEBI" id="CHEBI:78516"/>
        <dbReference type="ChEBI" id="CHEBI:456215"/>
        <dbReference type="EC" id="6.1.1.23"/>
    </reaction>
</comment>
<comment type="subunit">
    <text evidence="1">Homodimer.</text>
</comment>
<comment type="subcellular location">
    <subcellularLocation>
        <location evidence="1">Cytoplasm</location>
    </subcellularLocation>
</comment>
<comment type="similarity">
    <text evidence="1">Belongs to the class-II aminoacyl-tRNA synthetase family. Type 1 subfamily.</text>
</comment>
<keyword id="KW-0030">Aminoacyl-tRNA synthetase</keyword>
<keyword id="KW-0067">ATP-binding</keyword>
<keyword id="KW-0963">Cytoplasm</keyword>
<keyword id="KW-0436">Ligase</keyword>
<keyword id="KW-0547">Nucleotide-binding</keyword>
<keyword id="KW-0648">Protein biosynthesis</keyword>
<keyword id="KW-1185">Reference proteome</keyword>
<protein>
    <recommendedName>
        <fullName evidence="1">Aspartate--tRNA(Asp/Asn) ligase</fullName>
        <ecNumber evidence="1">6.1.1.23</ecNumber>
    </recommendedName>
    <alternativeName>
        <fullName evidence="1">Aspartyl-tRNA synthetase</fullName>
        <shortName evidence="1">AspRS</shortName>
    </alternativeName>
    <alternativeName>
        <fullName evidence="1">Non-discriminating aspartyl-tRNA synthetase</fullName>
        <shortName evidence="1">ND-AspRS</shortName>
    </alternativeName>
</protein>
<dbReference type="EC" id="6.1.1.23" evidence="1"/>
<dbReference type="EMBL" id="CP001147">
    <property type="protein sequence ID" value="ACI22121.1"/>
    <property type="molecule type" value="Genomic_DNA"/>
</dbReference>
<dbReference type="RefSeq" id="WP_012546812.1">
    <property type="nucleotide sequence ID" value="NC_011296.1"/>
</dbReference>
<dbReference type="RefSeq" id="YP_002248460.1">
    <property type="nucleotide sequence ID" value="NC_011296.1"/>
</dbReference>
<dbReference type="SMR" id="B5YJP5"/>
<dbReference type="FunCoup" id="B5YJP5">
    <property type="interactions" value="454"/>
</dbReference>
<dbReference type="STRING" id="289376.THEYE_A0617"/>
<dbReference type="EnsemblBacteria" id="ACI22121">
    <property type="protein sequence ID" value="ACI22121"/>
    <property type="gene ID" value="THEYE_A0617"/>
</dbReference>
<dbReference type="KEGG" id="tye:THEYE_A0617"/>
<dbReference type="PATRIC" id="fig|289376.4.peg.611"/>
<dbReference type="eggNOG" id="COG0173">
    <property type="taxonomic scope" value="Bacteria"/>
</dbReference>
<dbReference type="HOGENOM" id="CLU_014330_3_2_0"/>
<dbReference type="InParanoid" id="B5YJP5"/>
<dbReference type="OrthoDB" id="9802326at2"/>
<dbReference type="Proteomes" id="UP000000718">
    <property type="component" value="Chromosome"/>
</dbReference>
<dbReference type="GO" id="GO:0005737">
    <property type="term" value="C:cytoplasm"/>
    <property type="evidence" value="ECO:0007669"/>
    <property type="project" value="UniProtKB-SubCell"/>
</dbReference>
<dbReference type="GO" id="GO:0004815">
    <property type="term" value="F:aspartate-tRNA ligase activity"/>
    <property type="evidence" value="ECO:0000318"/>
    <property type="project" value="GO_Central"/>
</dbReference>
<dbReference type="GO" id="GO:0050560">
    <property type="term" value="F:aspartate-tRNA(Asn) ligase activity"/>
    <property type="evidence" value="ECO:0007669"/>
    <property type="project" value="UniProtKB-EC"/>
</dbReference>
<dbReference type="GO" id="GO:0005524">
    <property type="term" value="F:ATP binding"/>
    <property type="evidence" value="ECO:0007669"/>
    <property type="project" value="UniProtKB-UniRule"/>
</dbReference>
<dbReference type="GO" id="GO:0003676">
    <property type="term" value="F:nucleic acid binding"/>
    <property type="evidence" value="ECO:0007669"/>
    <property type="project" value="InterPro"/>
</dbReference>
<dbReference type="GO" id="GO:0006422">
    <property type="term" value="P:aspartyl-tRNA aminoacylation"/>
    <property type="evidence" value="ECO:0000318"/>
    <property type="project" value="GO_Central"/>
</dbReference>
<dbReference type="CDD" id="cd00777">
    <property type="entry name" value="AspRS_core"/>
    <property type="match status" value="1"/>
</dbReference>
<dbReference type="CDD" id="cd04317">
    <property type="entry name" value="EcAspRS_like_N"/>
    <property type="match status" value="1"/>
</dbReference>
<dbReference type="Gene3D" id="3.30.930.10">
    <property type="entry name" value="Bira Bifunctional Protein, Domain 2"/>
    <property type="match status" value="1"/>
</dbReference>
<dbReference type="Gene3D" id="3.30.1360.30">
    <property type="entry name" value="GAD-like domain"/>
    <property type="match status" value="1"/>
</dbReference>
<dbReference type="Gene3D" id="2.40.50.140">
    <property type="entry name" value="Nucleic acid-binding proteins"/>
    <property type="match status" value="1"/>
</dbReference>
<dbReference type="HAMAP" id="MF_00044">
    <property type="entry name" value="Asp_tRNA_synth_type1"/>
    <property type="match status" value="1"/>
</dbReference>
<dbReference type="InterPro" id="IPR004364">
    <property type="entry name" value="Aa-tRNA-synt_II"/>
</dbReference>
<dbReference type="InterPro" id="IPR006195">
    <property type="entry name" value="aa-tRNA-synth_II"/>
</dbReference>
<dbReference type="InterPro" id="IPR045864">
    <property type="entry name" value="aa-tRNA-synth_II/BPL/LPL"/>
</dbReference>
<dbReference type="InterPro" id="IPR004524">
    <property type="entry name" value="Asp-tRNA-ligase_1"/>
</dbReference>
<dbReference type="InterPro" id="IPR047089">
    <property type="entry name" value="Asp-tRNA-ligase_1_N"/>
</dbReference>
<dbReference type="InterPro" id="IPR002312">
    <property type="entry name" value="Asp/Asn-tRNA-synth_IIb"/>
</dbReference>
<dbReference type="InterPro" id="IPR047090">
    <property type="entry name" value="AspRS_core"/>
</dbReference>
<dbReference type="InterPro" id="IPR004115">
    <property type="entry name" value="GAD-like_sf"/>
</dbReference>
<dbReference type="InterPro" id="IPR029351">
    <property type="entry name" value="GAD_dom"/>
</dbReference>
<dbReference type="InterPro" id="IPR012340">
    <property type="entry name" value="NA-bd_OB-fold"/>
</dbReference>
<dbReference type="InterPro" id="IPR004365">
    <property type="entry name" value="NA-bd_OB_tRNA"/>
</dbReference>
<dbReference type="NCBIfam" id="TIGR00459">
    <property type="entry name" value="aspS_bact"/>
    <property type="match status" value="1"/>
</dbReference>
<dbReference type="NCBIfam" id="NF001750">
    <property type="entry name" value="PRK00476.1"/>
    <property type="match status" value="1"/>
</dbReference>
<dbReference type="PANTHER" id="PTHR22594:SF5">
    <property type="entry name" value="ASPARTATE--TRNA LIGASE, MITOCHONDRIAL"/>
    <property type="match status" value="1"/>
</dbReference>
<dbReference type="PANTHER" id="PTHR22594">
    <property type="entry name" value="ASPARTYL/LYSYL-TRNA SYNTHETASE"/>
    <property type="match status" value="1"/>
</dbReference>
<dbReference type="Pfam" id="PF02938">
    <property type="entry name" value="GAD"/>
    <property type="match status" value="1"/>
</dbReference>
<dbReference type="Pfam" id="PF00152">
    <property type="entry name" value="tRNA-synt_2"/>
    <property type="match status" value="1"/>
</dbReference>
<dbReference type="Pfam" id="PF01336">
    <property type="entry name" value="tRNA_anti-codon"/>
    <property type="match status" value="1"/>
</dbReference>
<dbReference type="PRINTS" id="PR01042">
    <property type="entry name" value="TRNASYNTHASP"/>
</dbReference>
<dbReference type="SUPFAM" id="SSF55681">
    <property type="entry name" value="Class II aaRS and biotin synthetases"/>
    <property type="match status" value="1"/>
</dbReference>
<dbReference type="SUPFAM" id="SSF55261">
    <property type="entry name" value="GAD domain-like"/>
    <property type="match status" value="1"/>
</dbReference>
<dbReference type="SUPFAM" id="SSF50249">
    <property type="entry name" value="Nucleic acid-binding proteins"/>
    <property type="match status" value="1"/>
</dbReference>
<dbReference type="PROSITE" id="PS50862">
    <property type="entry name" value="AA_TRNA_LIGASE_II"/>
    <property type="match status" value="1"/>
</dbReference>
<name>SYDND_THEYD</name>
<reference key="1">
    <citation type="submission" date="2008-08" db="EMBL/GenBank/DDBJ databases">
        <title>The complete genome sequence of Thermodesulfovibrio yellowstonii strain ATCC 51303 / DSM 11347 / YP87.</title>
        <authorList>
            <person name="Dodson R.J."/>
            <person name="Durkin A.S."/>
            <person name="Wu M."/>
            <person name="Eisen J."/>
            <person name="Sutton G."/>
        </authorList>
    </citation>
    <scope>NUCLEOTIDE SEQUENCE [LARGE SCALE GENOMIC DNA]</scope>
    <source>
        <strain>ATCC 51303 / DSM 11347 / YP87</strain>
    </source>
</reference>
<feature type="chain" id="PRO_1000199019" description="Aspartate--tRNA(Asp/Asn) ligase">
    <location>
        <begin position="1"/>
        <end position="594"/>
    </location>
</feature>
<feature type="region of interest" description="Aspartate" evidence="1">
    <location>
        <begin position="199"/>
        <end position="202"/>
    </location>
</feature>
<feature type="binding site" evidence="1">
    <location>
        <position position="175"/>
    </location>
    <ligand>
        <name>L-aspartate</name>
        <dbReference type="ChEBI" id="CHEBI:29991"/>
    </ligand>
</feature>
<feature type="binding site" evidence="1">
    <location>
        <begin position="221"/>
        <end position="223"/>
    </location>
    <ligand>
        <name>ATP</name>
        <dbReference type="ChEBI" id="CHEBI:30616"/>
    </ligand>
</feature>
<feature type="binding site" evidence="1">
    <location>
        <position position="221"/>
    </location>
    <ligand>
        <name>L-aspartate</name>
        <dbReference type="ChEBI" id="CHEBI:29991"/>
    </ligand>
</feature>
<feature type="binding site" evidence="1">
    <location>
        <position position="230"/>
    </location>
    <ligand>
        <name>ATP</name>
        <dbReference type="ChEBI" id="CHEBI:30616"/>
    </ligand>
</feature>
<feature type="binding site" evidence="1">
    <location>
        <position position="446"/>
    </location>
    <ligand>
        <name>L-aspartate</name>
        <dbReference type="ChEBI" id="CHEBI:29991"/>
    </ligand>
</feature>
<feature type="binding site" evidence="1">
    <location>
        <position position="491"/>
    </location>
    <ligand>
        <name>ATP</name>
        <dbReference type="ChEBI" id="CHEBI:30616"/>
    </ligand>
</feature>
<feature type="binding site" evidence="1">
    <location>
        <position position="498"/>
    </location>
    <ligand>
        <name>L-aspartate</name>
        <dbReference type="ChEBI" id="CHEBI:29991"/>
    </ligand>
</feature>
<feature type="binding site" evidence="1">
    <location>
        <begin position="543"/>
        <end position="546"/>
    </location>
    <ligand>
        <name>ATP</name>
        <dbReference type="ChEBI" id="CHEBI:30616"/>
    </ligand>
</feature>
<feature type="site" description="Important for tRNA non-discrimination" evidence="1">
    <location>
        <position position="31"/>
    </location>
</feature>
<feature type="site" description="Important for tRNA non-discrimination" evidence="1">
    <location>
        <position position="83"/>
    </location>
</feature>
<evidence type="ECO:0000255" key="1">
    <source>
        <dbReference type="HAMAP-Rule" id="MF_00044"/>
    </source>
</evidence>
<organism>
    <name type="scientific">Thermodesulfovibrio yellowstonii (strain ATCC 51303 / DSM 11347 / YP87)</name>
    <dbReference type="NCBI Taxonomy" id="289376"/>
    <lineage>
        <taxon>Bacteria</taxon>
        <taxon>Pseudomonadati</taxon>
        <taxon>Nitrospirota</taxon>
        <taxon>Thermodesulfovibrionia</taxon>
        <taxon>Thermodesulfovibrionales</taxon>
        <taxon>Thermodesulfovibrionaceae</taxon>
        <taxon>Thermodesulfovibrio</taxon>
    </lineage>
</organism>
<proteinExistence type="inferred from homology"/>
<gene>
    <name evidence="1" type="primary">aspS</name>
    <name type="ordered locus">THEYE_A0617</name>
</gene>
<accession>B5YJP5</accession>
<sequence>MFRDKYCAEVKEEEIGKEISLCGWVFRRRDHGGLIFIDLRDRTGIIQVVFSPEISIEMHQKAHGLRSEYVIAVKGILKKRPEGTENPELITGNVELWAKELEILSFSKPLPFQLDEMAEVSELLRLKYRYLDLRRAEMQKNFLLRHRITMAVRNFLDSKGFVEVETPMLTKSTPEGARDFLVPSRLNPGTFYALPQSPQLFKQILMMSGFDRYFQIVRCFRDEDLRADRQPEFTQIDFEMSFVKPEDIIEIVEEMLFKCFKEVLEVDIEIPFKRLTYEEAINKYGSDKPDLRFALEIQDVSELVKNSQFKVFLDTIEKGGVVKAICGKGLASLSRSEIDKLTALAQSFGAKGLAWIKVKNGFESPIVKFFSESLLREIAEKVGVEDGDMILFVADKKSLANEVLGRLRLEIAERAQIKKEGFYFAWVLDFPLFEWDEEEKRFVSMHHPFTSPKDEDIDKLLKIPQEAFYDPQSSVKDIKAKAYDIVLNGYELGGGSIRIHKADIQEHIFRILAISEEEIKRRFGFFVEALRYGAPPHGGIALGLDRLVMVMTGANSLRDVIAFPKTQKAFCPLSEAPSEVNLKQLRELHIKLDI</sequence>